<proteinExistence type="evidence at protein level"/>
<keyword id="KW-0067">ATP-binding</keyword>
<keyword id="KW-1003">Cell membrane</keyword>
<keyword id="KW-0472">Membrane</keyword>
<keyword id="KW-0547">Nucleotide-binding</keyword>
<keyword id="KW-1278">Translocase</keyword>
<keyword id="KW-0813">Transport</keyword>
<dbReference type="EC" id="7.6.2.11" evidence="1"/>
<dbReference type="EMBL" id="BA000018">
    <property type="protein sequence ID" value="BAB42196.1"/>
    <property type="molecule type" value="Genomic_DNA"/>
</dbReference>
<dbReference type="PIR" id="H89879">
    <property type="entry name" value="H89879"/>
</dbReference>
<dbReference type="RefSeq" id="WP_000433551.1">
    <property type="nucleotide sequence ID" value="NC_002745.2"/>
</dbReference>
<dbReference type="SMR" id="Q7A679"/>
<dbReference type="EnsemblBacteria" id="BAB42196">
    <property type="protein sequence ID" value="BAB42196"/>
    <property type="gene ID" value="BAB42196"/>
</dbReference>
<dbReference type="KEGG" id="sau:SA0950"/>
<dbReference type="HOGENOM" id="CLU_000604_1_1_9"/>
<dbReference type="GO" id="GO:0043190">
    <property type="term" value="C:ATP-binding cassette (ABC) transporter complex"/>
    <property type="evidence" value="ECO:0007669"/>
    <property type="project" value="InterPro"/>
</dbReference>
<dbReference type="GO" id="GO:0015417">
    <property type="term" value="F:ABC-type polyamine transporter activity"/>
    <property type="evidence" value="ECO:0007669"/>
    <property type="project" value="UniProtKB-EC"/>
</dbReference>
<dbReference type="GO" id="GO:0005524">
    <property type="term" value="F:ATP binding"/>
    <property type="evidence" value="ECO:0007669"/>
    <property type="project" value="UniProtKB-KW"/>
</dbReference>
<dbReference type="GO" id="GO:0016887">
    <property type="term" value="F:ATP hydrolysis activity"/>
    <property type="evidence" value="ECO:0007669"/>
    <property type="project" value="InterPro"/>
</dbReference>
<dbReference type="FunFam" id="3.40.50.300:FF:000133">
    <property type="entry name" value="Spermidine/putrescine import ATP-binding protein PotA"/>
    <property type="match status" value="1"/>
</dbReference>
<dbReference type="Gene3D" id="2.40.50.100">
    <property type="match status" value="1"/>
</dbReference>
<dbReference type="Gene3D" id="3.40.50.300">
    <property type="entry name" value="P-loop containing nucleotide triphosphate hydrolases"/>
    <property type="match status" value="1"/>
</dbReference>
<dbReference type="InterPro" id="IPR003593">
    <property type="entry name" value="AAA+_ATPase"/>
</dbReference>
<dbReference type="InterPro" id="IPR050093">
    <property type="entry name" value="ABC_SmlMolc_Importer"/>
</dbReference>
<dbReference type="InterPro" id="IPR003439">
    <property type="entry name" value="ABC_transporter-like_ATP-bd"/>
</dbReference>
<dbReference type="InterPro" id="IPR017871">
    <property type="entry name" value="ABC_transporter-like_CS"/>
</dbReference>
<dbReference type="InterPro" id="IPR008995">
    <property type="entry name" value="Mo/tungstate-bd_C_term_dom"/>
</dbReference>
<dbReference type="InterPro" id="IPR027417">
    <property type="entry name" value="P-loop_NTPase"/>
</dbReference>
<dbReference type="InterPro" id="IPR013611">
    <property type="entry name" value="Transp-assoc_OB_typ2"/>
</dbReference>
<dbReference type="PANTHER" id="PTHR42781">
    <property type="entry name" value="SPERMIDINE/PUTRESCINE IMPORT ATP-BINDING PROTEIN POTA"/>
    <property type="match status" value="1"/>
</dbReference>
<dbReference type="PANTHER" id="PTHR42781:SF4">
    <property type="entry name" value="SPERMIDINE_PUTRESCINE IMPORT ATP-BINDING PROTEIN POTA"/>
    <property type="match status" value="1"/>
</dbReference>
<dbReference type="Pfam" id="PF00005">
    <property type="entry name" value="ABC_tran"/>
    <property type="match status" value="1"/>
</dbReference>
<dbReference type="Pfam" id="PF08402">
    <property type="entry name" value="TOBE_2"/>
    <property type="match status" value="1"/>
</dbReference>
<dbReference type="SMART" id="SM00382">
    <property type="entry name" value="AAA"/>
    <property type="match status" value="1"/>
</dbReference>
<dbReference type="SUPFAM" id="SSF50331">
    <property type="entry name" value="MOP-like"/>
    <property type="match status" value="1"/>
</dbReference>
<dbReference type="SUPFAM" id="SSF52540">
    <property type="entry name" value="P-loop containing nucleoside triphosphate hydrolases"/>
    <property type="match status" value="1"/>
</dbReference>
<dbReference type="PROSITE" id="PS00211">
    <property type="entry name" value="ABC_TRANSPORTER_1"/>
    <property type="match status" value="1"/>
</dbReference>
<dbReference type="PROSITE" id="PS50893">
    <property type="entry name" value="ABC_TRANSPORTER_2"/>
    <property type="match status" value="1"/>
</dbReference>
<dbReference type="PROSITE" id="PS51305">
    <property type="entry name" value="POTA"/>
    <property type="match status" value="1"/>
</dbReference>
<protein>
    <recommendedName>
        <fullName evidence="1">Spermidine/putrescine import ATP-binding protein PotA</fullName>
        <ecNumber evidence="1">7.6.2.11</ecNumber>
    </recommendedName>
</protein>
<reference key="1">
    <citation type="journal article" date="2001" name="Lancet">
        <title>Whole genome sequencing of meticillin-resistant Staphylococcus aureus.</title>
        <authorList>
            <person name="Kuroda M."/>
            <person name="Ohta T."/>
            <person name="Uchiyama I."/>
            <person name="Baba T."/>
            <person name="Yuzawa H."/>
            <person name="Kobayashi I."/>
            <person name="Cui L."/>
            <person name="Oguchi A."/>
            <person name="Aoki K."/>
            <person name="Nagai Y."/>
            <person name="Lian J.-Q."/>
            <person name="Ito T."/>
            <person name="Kanamori M."/>
            <person name="Matsumaru H."/>
            <person name="Maruyama A."/>
            <person name="Murakami H."/>
            <person name="Hosoyama A."/>
            <person name="Mizutani-Ui Y."/>
            <person name="Takahashi N.K."/>
            <person name="Sawano T."/>
            <person name="Inoue R."/>
            <person name="Kaito C."/>
            <person name="Sekimizu K."/>
            <person name="Hirakawa H."/>
            <person name="Kuhara S."/>
            <person name="Goto S."/>
            <person name="Yabuzaki J."/>
            <person name="Kanehisa M."/>
            <person name="Yamashita A."/>
            <person name="Oshima K."/>
            <person name="Furuya K."/>
            <person name="Yoshino C."/>
            <person name="Shiba T."/>
            <person name="Hattori M."/>
            <person name="Ogasawara N."/>
            <person name="Hayashi H."/>
            <person name="Hiramatsu K."/>
        </authorList>
    </citation>
    <scope>NUCLEOTIDE SEQUENCE [LARGE SCALE GENOMIC DNA]</scope>
    <source>
        <strain>N315</strain>
    </source>
</reference>
<reference key="2">
    <citation type="submission" date="2007-10" db="UniProtKB">
        <title>Shotgun proteomic analysis of total and membrane protein extracts of S. aureus strain N315.</title>
        <authorList>
            <person name="Vaezzadeh A.R."/>
            <person name="Deshusses J."/>
            <person name="Lescuyer P."/>
            <person name="Hochstrasser D.F."/>
        </authorList>
    </citation>
    <scope>IDENTIFICATION BY MASS SPECTROMETRY [LARGE SCALE ANALYSIS]</scope>
    <source>
        <strain>N315</strain>
    </source>
</reference>
<feature type="chain" id="PRO_0000092756" description="Spermidine/putrescine import ATP-binding protein PotA">
    <location>
        <begin position="1"/>
        <end position="364"/>
    </location>
</feature>
<feature type="domain" description="ABC transporter" evidence="1">
    <location>
        <begin position="5"/>
        <end position="235"/>
    </location>
</feature>
<feature type="binding site" evidence="1">
    <location>
        <begin position="37"/>
        <end position="44"/>
    </location>
    <ligand>
        <name>ATP</name>
        <dbReference type="ChEBI" id="CHEBI:30616"/>
    </ligand>
</feature>
<name>POTA_STAAN</name>
<evidence type="ECO:0000255" key="1">
    <source>
        <dbReference type="HAMAP-Rule" id="MF_01726"/>
    </source>
</evidence>
<sequence>MEPLLSLKSVSKSYDDLNILDDIDIDIESGYFYTLLGPSGCGKTTILKLIAGFEYPDSGEVIYQNKPIGNLPPNKRKVNTVFQDYALFPHLNVYDNIAFGLKLKKLSKTEIDQKVTEALKLVKLSGYEKRNINEMSGGQKQRVAIARAIVNEPEILLLDESLSALDLKLRTEMQYELRELQSRLGITFIFVTHDQEEALALSDFLFVLKDGKIQQFGTPTDIYDEPVNRFVADFIGESNIVEGRMVRDYVVNIYGQDFECVDMGIPENKKVEVVIRPEDISLIKAEEGLFKATVDSMLFRGVHYEICCIDNKGYEWVIQTTKKAEVGSEVGLYFDPEAIHIMVPGETEEEFDKRIESYEEVDNA</sequence>
<accession>Q7A679</accession>
<gene>
    <name evidence="1" type="primary">potA</name>
    <name type="ordered locus">SA0950</name>
</gene>
<organism>
    <name type="scientific">Staphylococcus aureus (strain N315)</name>
    <dbReference type="NCBI Taxonomy" id="158879"/>
    <lineage>
        <taxon>Bacteria</taxon>
        <taxon>Bacillati</taxon>
        <taxon>Bacillota</taxon>
        <taxon>Bacilli</taxon>
        <taxon>Bacillales</taxon>
        <taxon>Staphylococcaceae</taxon>
        <taxon>Staphylococcus</taxon>
    </lineage>
</organism>
<comment type="function">
    <text evidence="1">Part of the ABC transporter complex PotABCD involved in spermidine/putrescine import. Responsible for energy coupling to the transport system.</text>
</comment>
<comment type="catalytic activity">
    <reaction evidence="1">
        <text>ATP + H2O + polyamine-[polyamine-binding protein]Side 1 = ADP + phosphate + polyamineSide 2 + [polyamine-binding protein]Side 1.</text>
        <dbReference type="EC" id="7.6.2.11"/>
    </reaction>
</comment>
<comment type="subunit">
    <text evidence="1">The complex is composed of two ATP-binding proteins (PotA), two transmembrane proteins (PotB and PotC) and a solute-binding protein (PotD).</text>
</comment>
<comment type="subcellular location">
    <subcellularLocation>
        <location evidence="1">Cell membrane</location>
        <topology evidence="1">Peripheral membrane protein</topology>
    </subcellularLocation>
</comment>
<comment type="similarity">
    <text evidence="1">Belongs to the ABC transporter superfamily. Spermidine/putrescine importer (TC 3.A.1.11.1) family.</text>
</comment>